<evidence type="ECO:0000255" key="1"/>
<evidence type="ECO:0000256" key="2">
    <source>
        <dbReference type="SAM" id="MobiDB-lite"/>
    </source>
</evidence>
<evidence type="ECO:0000305" key="3"/>
<keyword id="KW-1003">Cell membrane</keyword>
<keyword id="KW-0449">Lipoprotein</keyword>
<keyword id="KW-0472">Membrane</keyword>
<keyword id="KW-0564">Palmitate</keyword>
<keyword id="KW-1185">Reference proteome</keyword>
<keyword id="KW-0732">Signal</keyword>
<feature type="signal peptide" evidence="1">
    <location>
        <begin position="1"/>
        <end position="28"/>
    </location>
</feature>
<feature type="chain" id="PRO_0000018141" description="Putative lipoprotein LprE">
    <location>
        <begin position="29"/>
        <end position="202"/>
    </location>
</feature>
<feature type="region of interest" description="Disordered" evidence="2">
    <location>
        <begin position="29"/>
        <end position="78"/>
    </location>
</feature>
<feature type="compositionally biased region" description="Polar residues" evidence="2">
    <location>
        <begin position="32"/>
        <end position="46"/>
    </location>
</feature>
<feature type="compositionally biased region" description="Pro residues" evidence="2">
    <location>
        <begin position="51"/>
        <end position="61"/>
    </location>
</feature>
<feature type="compositionally biased region" description="Low complexity" evidence="2">
    <location>
        <begin position="62"/>
        <end position="75"/>
    </location>
</feature>
<feature type="lipid moiety-binding region" description="N-palmitoyl cysteine" evidence="1">
    <location>
        <position position="29"/>
    </location>
</feature>
<feature type="lipid moiety-binding region" description="S-diacylglycerol cysteine" evidence="1">
    <location>
        <position position="29"/>
    </location>
</feature>
<organism>
    <name type="scientific">Mycobacterium tuberculosis (strain ATCC 25618 / H37Rv)</name>
    <dbReference type="NCBI Taxonomy" id="83332"/>
    <lineage>
        <taxon>Bacteria</taxon>
        <taxon>Bacillati</taxon>
        <taxon>Actinomycetota</taxon>
        <taxon>Actinomycetes</taxon>
        <taxon>Mycobacteriales</taxon>
        <taxon>Mycobacteriaceae</taxon>
        <taxon>Mycobacterium</taxon>
        <taxon>Mycobacterium tuberculosis complex</taxon>
    </lineage>
</organism>
<name>LPRE_MYCTU</name>
<reference key="1">
    <citation type="journal article" date="1998" name="Nature">
        <title>Deciphering the biology of Mycobacterium tuberculosis from the complete genome sequence.</title>
        <authorList>
            <person name="Cole S.T."/>
            <person name="Brosch R."/>
            <person name="Parkhill J."/>
            <person name="Garnier T."/>
            <person name="Churcher C.M."/>
            <person name="Harris D.E."/>
            <person name="Gordon S.V."/>
            <person name="Eiglmeier K."/>
            <person name="Gas S."/>
            <person name="Barry C.E. III"/>
            <person name="Tekaia F."/>
            <person name="Badcock K."/>
            <person name="Basham D."/>
            <person name="Brown D."/>
            <person name="Chillingworth T."/>
            <person name="Connor R."/>
            <person name="Davies R.M."/>
            <person name="Devlin K."/>
            <person name="Feltwell T."/>
            <person name="Gentles S."/>
            <person name="Hamlin N."/>
            <person name="Holroyd S."/>
            <person name="Hornsby T."/>
            <person name="Jagels K."/>
            <person name="Krogh A."/>
            <person name="McLean J."/>
            <person name="Moule S."/>
            <person name="Murphy L.D."/>
            <person name="Oliver S."/>
            <person name="Osborne J."/>
            <person name="Quail M.A."/>
            <person name="Rajandream M.A."/>
            <person name="Rogers J."/>
            <person name="Rutter S."/>
            <person name="Seeger K."/>
            <person name="Skelton S."/>
            <person name="Squares S."/>
            <person name="Squares R."/>
            <person name="Sulston J.E."/>
            <person name="Taylor K."/>
            <person name="Whitehead S."/>
            <person name="Barrell B.G."/>
        </authorList>
    </citation>
    <scope>NUCLEOTIDE SEQUENCE [LARGE SCALE GENOMIC DNA]</scope>
    <source>
        <strain>ATCC 25618 / H37Rv</strain>
    </source>
</reference>
<reference key="2">
    <citation type="journal article" date="2011" name="Mol. Cell. Proteomics">
        <title>Proteogenomic analysis of Mycobacterium tuberculosis by high resolution mass spectrometry.</title>
        <authorList>
            <person name="Kelkar D.S."/>
            <person name="Kumar D."/>
            <person name="Kumar P."/>
            <person name="Balakrishnan L."/>
            <person name="Muthusamy B."/>
            <person name="Yadav A.K."/>
            <person name="Shrivastava P."/>
            <person name="Marimuthu A."/>
            <person name="Anand S."/>
            <person name="Sundaram H."/>
            <person name="Kingsbury R."/>
            <person name="Harsha H.C."/>
            <person name="Nair B."/>
            <person name="Prasad T.S."/>
            <person name="Chauhan D.S."/>
            <person name="Katoch K."/>
            <person name="Katoch V.M."/>
            <person name="Kumar P."/>
            <person name="Chaerkady R."/>
            <person name="Ramachandran S."/>
            <person name="Dash D."/>
            <person name="Pandey A."/>
        </authorList>
    </citation>
    <scope>IDENTIFICATION BY MASS SPECTROMETRY [LARGE SCALE ANALYSIS]</scope>
    <source>
        <strain>ATCC 25618 / H37Rv</strain>
    </source>
</reference>
<accession>P9WK49</accession>
<accession>L0T935</accession>
<accession>P65312</accession>
<accession>Q11065</accession>
<gene>
    <name type="primary">lprE</name>
    <name type="ordered locus">Rv1252c</name>
    <name type="ORF">MTCY50.30</name>
</gene>
<protein>
    <recommendedName>
        <fullName>Putative lipoprotein LprE</fullName>
    </recommendedName>
</protein>
<sequence>MPGVWSPPCPTTPRVGVVAALVAATLTGCGSGDSTVAKTPEATPSLSTAHPAPPSSEPSPPSATAAPPSNHSAAPVDPCAVNLASPTIAKVVSELPRDPRSEQPWNPEPLAGNYNECAQLSAVVIKANTNAGNPTTRAVMFHLGKYIPQGVPDTYGFTGIDTSQCTGDTVALTYASGIGLNNVVKFRWNGGGVELIGNTTGG</sequence>
<comment type="subcellular location">
    <subcellularLocation>
        <location evidence="3">Cell membrane</location>
        <topology evidence="3">Lipid-anchor</topology>
    </subcellularLocation>
</comment>
<dbReference type="EMBL" id="AL123456">
    <property type="protein sequence ID" value="CCP44008.1"/>
    <property type="molecule type" value="Genomic_DNA"/>
</dbReference>
<dbReference type="PIR" id="D70752">
    <property type="entry name" value="D70752"/>
</dbReference>
<dbReference type="RefSeq" id="NP_215768.1">
    <property type="nucleotide sequence ID" value="NC_000962.3"/>
</dbReference>
<dbReference type="RefSeq" id="WP_003406334.1">
    <property type="nucleotide sequence ID" value="NZ_NVQJ01000049.1"/>
</dbReference>
<dbReference type="STRING" id="83332.Rv1252c"/>
<dbReference type="PaxDb" id="83332-Rv1252c"/>
<dbReference type="DNASU" id="887064"/>
<dbReference type="GeneID" id="887064"/>
<dbReference type="KEGG" id="mtu:Rv1252c"/>
<dbReference type="KEGG" id="mtv:RVBD_1252c"/>
<dbReference type="TubercuList" id="Rv1252c"/>
<dbReference type="eggNOG" id="ENOG5031HE2">
    <property type="taxonomic scope" value="Bacteria"/>
</dbReference>
<dbReference type="InParanoid" id="P9WK49"/>
<dbReference type="OrthoDB" id="4762129at2"/>
<dbReference type="PHI-base" id="PHI:11416"/>
<dbReference type="Proteomes" id="UP000001584">
    <property type="component" value="Chromosome"/>
</dbReference>
<dbReference type="GO" id="GO:0005576">
    <property type="term" value="C:extracellular region"/>
    <property type="evidence" value="ECO:0007005"/>
    <property type="project" value="MTBBASE"/>
</dbReference>
<dbReference type="GO" id="GO:0005886">
    <property type="term" value="C:plasma membrane"/>
    <property type="evidence" value="ECO:0007669"/>
    <property type="project" value="UniProtKB-SubCell"/>
</dbReference>
<dbReference type="InterPro" id="IPR025971">
    <property type="entry name" value="LppP/LprE"/>
</dbReference>
<dbReference type="Pfam" id="PF14041">
    <property type="entry name" value="Lipoprotein_21"/>
    <property type="match status" value="1"/>
</dbReference>
<proteinExistence type="evidence at protein level"/>